<name>SPS1_XENLA</name>
<sequence length="392" mass="42847">MSVRESFNPESYELDKSFRLTRFAELKGTGCKVPQDVLQKLLESLQENHFQEDEQFLGAVMPRLGIGMDTCVIPLRHGGLSLVQTTDYIYPIVDDPYMMGRIACANVLSDLYAMGVTECDNMLMLLGVSNKLTDRERDKVMPLIIQGFKDAAEEAGTSVTGGQTVLNPWVVLGGVATTVCQPNEFIMPDNAVPGDVLVLTKPLGTQVAVAVHQWLDIPEKWNKIKLVVTQEDVELAYQEAMMNMARLNRTAAGLMHTFNAHAATDITGFGILGHAQNLAKQQRNEVSFVIHNLPVLAKMAAVSKACGNMFGLMHGSCPETSGGLLICLPREQAARFCAEIKSPKYGEGHQAWIIGIVEKGNRTARIIDKPRIIEVAPQIATQNVNPTPGATS</sequence>
<accession>Q6PF47</accession>
<reference key="1">
    <citation type="submission" date="2003-09" db="EMBL/GenBank/DDBJ databases">
        <authorList>
            <consortium name="NIH - Xenopus Gene Collection (XGC) project"/>
        </authorList>
    </citation>
    <scope>NUCLEOTIDE SEQUENCE [LARGE SCALE MRNA]</scope>
    <source>
        <tissue>Embryo</tissue>
    </source>
</reference>
<gene>
    <name type="primary">sephs1</name>
</gene>
<protein>
    <recommendedName>
        <fullName>Selenide, water dikinase 1</fullName>
        <ecNumber evidence="2">2.7.9.3</ecNumber>
    </recommendedName>
    <alternativeName>
        <fullName>Selenium donor protein 1</fullName>
    </alternativeName>
    <alternativeName>
        <fullName>Selenophosphate synthase 1</fullName>
    </alternativeName>
</protein>
<keyword id="KW-0067">ATP-binding</keyword>
<keyword id="KW-1003">Cell membrane</keyword>
<keyword id="KW-0418">Kinase</keyword>
<keyword id="KW-0460">Magnesium</keyword>
<keyword id="KW-0472">Membrane</keyword>
<keyword id="KW-0479">Metal-binding</keyword>
<keyword id="KW-0547">Nucleotide-binding</keyword>
<keyword id="KW-0539">Nucleus</keyword>
<keyword id="KW-1185">Reference proteome</keyword>
<keyword id="KW-0711">Selenium</keyword>
<keyword id="KW-0808">Transferase</keyword>
<feature type="chain" id="PRO_0000312509" description="Selenide, water dikinase 1">
    <location>
        <begin position="1"/>
        <end position="392"/>
    </location>
</feature>
<feature type="active site" evidence="3">
    <location>
        <position position="31"/>
    </location>
</feature>
<feature type="binding site" description="in other chain" evidence="2">
    <location>
        <position position="32"/>
    </location>
    <ligand>
        <name>ATP</name>
        <dbReference type="ChEBI" id="CHEBI:30616"/>
        <note>ligand shared between dimeric partners</note>
    </ligand>
</feature>
<feature type="binding site" description="in other chain" evidence="2">
    <location>
        <begin position="67"/>
        <end position="69"/>
    </location>
    <ligand>
        <name>ATP</name>
        <dbReference type="ChEBI" id="CHEBI:30616"/>
        <note>ligand shared between dimeric partners</note>
    </ligand>
</feature>
<feature type="binding site" evidence="2">
    <location>
        <position position="69"/>
    </location>
    <ligand>
        <name>Mg(2+)</name>
        <dbReference type="ChEBI" id="CHEBI:18420"/>
    </ligand>
</feature>
<feature type="binding site" description="in other chain" evidence="2">
    <location>
        <position position="87"/>
    </location>
    <ligand>
        <name>ATP</name>
        <dbReference type="ChEBI" id="CHEBI:30616"/>
        <note>ligand shared between dimeric partners</note>
    </ligand>
</feature>
<feature type="binding site" description="in other chain" evidence="2">
    <location>
        <position position="110"/>
    </location>
    <ligand>
        <name>ATP</name>
        <dbReference type="ChEBI" id="CHEBI:30616"/>
        <note>ligand shared between dimeric partners</note>
    </ligand>
</feature>
<feature type="binding site" evidence="2">
    <location>
        <position position="110"/>
    </location>
    <ligand>
        <name>Mg(2+)</name>
        <dbReference type="ChEBI" id="CHEBI:18420"/>
    </ligand>
</feature>
<feature type="binding site" evidence="2">
    <location>
        <begin position="161"/>
        <end position="164"/>
    </location>
    <ligand>
        <name>ATP</name>
        <dbReference type="ChEBI" id="CHEBI:30616"/>
        <note>ligand shared between dimeric partners</note>
    </ligand>
</feature>
<feature type="binding site" evidence="2">
    <location>
        <position position="265"/>
    </location>
    <ligand>
        <name>Mg(2+)</name>
        <dbReference type="ChEBI" id="CHEBI:18420"/>
    </ligand>
</feature>
<feature type="site" description="Important for catalytic activity" evidence="1">
    <location>
        <position position="32"/>
    </location>
</feature>
<comment type="function">
    <text evidence="2">Synthesizes selenophosphate from selenide and ATP.</text>
</comment>
<comment type="catalytic activity">
    <reaction evidence="2">
        <text>hydrogenselenide + ATP + H2O = selenophosphate + AMP + phosphate + 2 H(+)</text>
        <dbReference type="Rhea" id="RHEA:18737"/>
        <dbReference type="ChEBI" id="CHEBI:15377"/>
        <dbReference type="ChEBI" id="CHEBI:15378"/>
        <dbReference type="ChEBI" id="CHEBI:16144"/>
        <dbReference type="ChEBI" id="CHEBI:29317"/>
        <dbReference type="ChEBI" id="CHEBI:30616"/>
        <dbReference type="ChEBI" id="CHEBI:43474"/>
        <dbReference type="ChEBI" id="CHEBI:456215"/>
        <dbReference type="EC" id="2.7.9.3"/>
    </reaction>
</comment>
<comment type="cofactor">
    <cofactor evidence="2">
        <name>Mg(2+)</name>
        <dbReference type="ChEBI" id="CHEBI:18420"/>
    </cofactor>
    <text evidence="2">Binds 1 Mg(2+) ion per monomer.</text>
</comment>
<comment type="subunit">
    <text evidence="2">Homodimer.</text>
</comment>
<comment type="subcellular location">
    <subcellularLocation>
        <location evidence="2">Cell membrane</location>
        <topology evidence="4">Peripheral membrane protein</topology>
    </subcellularLocation>
    <subcellularLocation>
        <location evidence="2">Nucleus membrane</location>
        <topology evidence="4">Peripheral membrane protein</topology>
    </subcellularLocation>
</comment>
<comment type="similarity">
    <text evidence="4">Belongs to the selenophosphate synthase 1 family. Class II subfamily.</text>
</comment>
<comment type="caution">
    <text evidence="4">The conserved active site Cys (or selenocysteine) residue in position 29 is replaced by a Thr. However, as function in selenoprotein synthesis is probable, it is possible Cys-31 is the active site.</text>
</comment>
<organism>
    <name type="scientific">Xenopus laevis</name>
    <name type="common">African clawed frog</name>
    <dbReference type="NCBI Taxonomy" id="8355"/>
    <lineage>
        <taxon>Eukaryota</taxon>
        <taxon>Metazoa</taxon>
        <taxon>Chordata</taxon>
        <taxon>Craniata</taxon>
        <taxon>Vertebrata</taxon>
        <taxon>Euteleostomi</taxon>
        <taxon>Amphibia</taxon>
        <taxon>Batrachia</taxon>
        <taxon>Anura</taxon>
        <taxon>Pipoidea</taxon>
        <taxon>Pipidae</taxon>
        <taxon>Xenopodinae</taxon>
        <taxon>Xenopus</taxon>
        <taxon>Xenopus</taxon>
    </lineage>
</organism>
<proteinExistence type="evidence at transcript level"/>
<dbReference type="EC" id="2.7.9.3" evidence="2"/>
<dbReference type="EMBL" id="BC057731">
    <property type="protein sequence ID" value="AAH57731.1"/>
    <property type="molecule type" value="mRNA"/>
</dbReference>
<dbReference type="RefSeq" id="NP_001079959.1">
    <property type="nucleotide sequence ID" value="NM_001086490.1"/>
</dbReference>
<dbReference type="RefSeq" id="XP_018106163.1">
    <property type="nucleotide sequence ID" value="XM_018250674.1"/>
</dbReference>
<dbReference type="RefSeq" id="XP_018106164.1">
    <property type="nucleotide sequence ID" value="XM_018250675.1"/>
</dbReference>
<dbReference type="RefSeq" id="XP_018106165.1">
    <property type="nucleotide sequence ID" value="XM_018250676.1"/>
</dbReference>
<dbReference type="RefSeq" id="XP_018111219.1">
    <property type="nucleotide sequence ID" value="XM_018255730.1"/>
</dbReference>
<dbReference type="SMR" id="Q6PF47"/>
<dbReference type="GeneID" id="379650"/>
<dbReference type="KEGG" id="xla:108713050"/>
<dbReference type="KEGG" id="xla:379650"/>
<dbReference type="AGR" id="Xenbase:XB-GENE-986445"/>
<dbReference type="CTD" id="108713050"/>
<dbReference type="CTD" id="379650"/>
<dbReference type="Xenbase" id="XB-GENE-986445">
    <property type="gene designation" value="sephs1.L"/>
</dbReference>
<dbReference type="OMA" id="GIRSDMC"/>
<dbReference type="OrthoDB" id="409395at2759"/>
<dbReference type="Proteomes" id="UP000186698">
    <property type="component" value="Chromosome 3L"/>
</dbReference>
<dbReference type="Proteomes" id="UP000186698">
    <property type="component" value="Chromosome 3S"/>
</dbReference>
<dbReference type="Bgee" id="108713050">
    <property type="expression patterns" value="Expressed in testis and 19 other cell types or tissues"/>
</dbReference>
<dbReference type="GO" id="GO:0005737">
    <property type="term" value="C:cytoplasm"/>
    <property type="evidence" value="ECO:0000318"/>
    <property type="project" value="GO_Central"/>
</dbReference>
<dbReference type="GO" id="GO:0031965">
    <property type="term" value="C:nuclear membrane"/>
    <property type="evidence" value="ECO:0000250"/>
    <property type="project" value="UniProtKB"/>
</dbReference>
<dbReference type="GO" id="GO:0005886">
    <property type="term" value="C:plasma membrane"/>
    <property type="evidence" value="ECO:0000250"/>
    <property type="project" value="UniProtKB"/>
</dbReference>
<dbReference type="GO" id="GO:0005524">
    <property type="term" value="F:ATP binding"/>
    <property type="evidence" value="ECO:0007669"/>
    <property type="project" value="UniProtKB-KW"/>
</dbReference>
<dbReference type="GO" id="GO:0046872">
    <property type="term" value="F:metal ion binding"/>
    <property type="evidence" value="ECO:0007669"/>
    <property type="project" value="UniProtKB-KW"/>
</dbReference>
<dbReference type="GO" id="GO:0046982">
    <property type="term" value="F:protein heterodimerization activity"/>
    <property type="evidence" value="ECO:0000250"/>
    <property type="project" value="UniProtKB"/>
</dbReference>
<dbReference type="GO" id="GO:0042803">
    <property type="term" value="F:protein homodimerization activity"/>
    <property type="evidence" value="ECO:0000250"/>
    <property type="project" value="UniProtKB"/>
</dbReference>
<dbReference type="GO" id="GO:0004756">
    <property type="term" value="F:selenide, water dikinase activity"/>
    <property type="evidence" value="ECO:0000318"/>
    <property type="project" value="GO_Central"/>
</dbReference>
<dbReference type="GO" id="GO:0016260">
    <property type="term" value="P:selenocysteine biosynthetic process"/>
    <property type="evidence" value="ECO:0000318"/>
    <property type="project" value="GO_Central"/>
</dbReference>
<dbReference type="CDD" id="cd02195">
    <property type="entry name" value="SelD"/>
    <property type="match status" value="1"/>
</dbReference>
<dbReference type="FunFam" id="3.30.1330.10:FF:000006">
    <property type="entry name" value="Selenide water dikinase 1"/>
    <property type="match status" value="1"/>
</dbReference>
<dbReference type="FunFam" id="3.90.650.10:FF:000003">
    <property type="entry name" value="Selenide, water dikinase 1"/>
    <property type="match status" value="1"/>
</dbReference>
<dbReference type="Gene3D" id="3.90.650.10">
    <property type="entry name" value="PurM-like C-terminal domain"/>
    <property type="match status" value="1"/>
</dbReference>
<dbReference type="Gene3D" id="3.30.1330.10">
    <property type="entry name" value="PurM-like, N-terminal domain"/>
    <property type="match status" value="1"/>
</dbReference>
<dbReference type="InterPro" id="IPR010918">
    <property type="entry name" value="PurM-like_C_dom"/>
</dbReference>
<dbReference type="InterPro" id="IPR036676">
    <property type="entry name" value="PurM-like_C_sf"/>
</dbReference>
<dbReference type="InterPro" id="IPR016188">
    <property type="entry name" value="PurM-like_N"/>
</dbReference>
<dbReference type="InterPro" id="IPR036921">
    <property type="entry name" value="PurM-like_N_sf"/>
</dbReference>
<dbReference type="InterPro" id="IPR004536">
    <property type="entry name" value="SPS/SelD"/>
</dbReference>
<dbReference type="NCBIfam" id="TIGR00476">
    <property type="entry name" value="selD"/>
    <property type="match status" value="1"/>
</dbReference>
<dbReference type="PANTHER" id="PTHR10256">
    <property type="entry name" value="SELENIDE, WATER DIKINASE"/>
    <property type="match status" value="1"/>
</dbReference>
<dbReference type="PANTHER" id="PTHR10256:SF2">
    <property type="entry name" value="SELENIDE, WATER DIKINASE 1"/>
    <property type="match status" value="1"/>
</dbReference>
<dbReference type="Pfam" id="PF00586">
    <property type="entry name" value="AIRS"/>
    <property type="match status" value="1"/>
</dbReference>
<dbReference type="Pfam" id="PF02769">
    <property type="entry name" value="AIRS_C"/>
    <property type="match status" value="1"/>
</dbReference>
<dbReference type="PIRSF" id="PIRSF036407">
    <property type="entry name" value="Selenphspht_syn"/>
    <property type="match status" value="1"/>
</dbReference>
<dbReference type="SUPFAM" id="SSF56042">
    <property type="entry name" value="PurM C-terminal domain-like"/>
    <property type="match status" value="1"/>
</dbReference>
<dbReference type="SUPFAM" id="SSF55326">
    <property type="entry name" value="PurM N-terminal domain-like"/>
    <property type="match status" value="1"/>
</dbReference>
<evidence type="ECO:0000250" key="1">
    <source>
        <dbReference type="UniProtKB" id="P16456"/>
    </source>
</evidence>
<evidence type="ECO:0000250" key="2">
    <source>
        <dbReference type="UniProtKB" id="P49903"/>
    </source>
</evidence>
<evidence type="ECO:0000255" key="3"/>
<evidence type="ECO:0000305" key="4"/>